<feature type="chain" id="PRO_1000000829" description="Adenylosuccinate synthetase">
    <location>
        <begin position="1"/>
        <end position="429"/>
    </location>
</feature>
<feature type="active site" description="Proton acceptor" evidence="1">
    <location>
        <position position="13"/>
    </location>
</feature>
<feature type="active site" description="Proton donor" evidence="1">
    <location>
        <position position="41"/>
    </location>
</feature>
<feature type="binding site" evidence="1">
    <location>
        <begin position="12"/>
        <end position="18"/>
    </location>
    <ligand>
        <name>GTP</name>
        <dbReference type="ChEBI" id="CHEBI:37565"/>
    </ligand>
</feature>
<feature type="binding site" description="in other chain" evidence="1">
    <location>
        <begin position="13"/>
        <end position="16"/>
    </location>
    <ligand>
        <name>IMP</name>
        <dbReference type="ChEBI" id="CHEBI:58053"/>
        <note>ligand shared between dimeric partners</note>
    </ligand>
</feature>
<feature type="binding site" evidence="1">
    <location>
        <position position="13"/>
    </location>
    <ligand>
        <name>Mg(2+)</name>
        <dbReference type="ChEBI" id="CHEBI:18420"/>
    </ligand>
</feature>
<feature type="binding site" description="in other chain" evidence="1">
    <location>
        <begin position="38"/>
        <end position="41"/>
    </location>
    <ligand>
        <name>IMP</name>
        <dbReference type="ChEBI" id="CHEBI:58053"/>
        <note>ligand shared between dimeric partners</note>
    </ligand>
</feature>
<feature type="binding site" evidence="1">
    <location>
        <begin position="40"/>
        <end position="42"/>
    </location>
    <ligand>
        <name>GTP</name>
        <dbReference type="ChEBI" id="CHEBI:37565"/>
    </ligand>
</feature>
<feature type="binding site" evidence="1">
    <location>
        <position position="40"/>
    </location>
    <ligand>
        <name>Mg(2+)</name>
        <dbReference type="ChEBI" id="CHEBI:18420"/>
    </ligand>
</feature>
<feature type="binding site" description="in other chain" evidence="1">
    <location>
        <position position="129"/>
    </location>
    <ligand>
        <name>IMP</name>
        <dbReference type="ChEBI" id="CHEBI:58053"/>
        <note>ligand shared between dimeric partners</note>
    </ligand>
</feature>
<feature type="binding site" evidence="1">
    <location>
        <position position="143"/>
    </location>
    <ligand>
        <name>IMP</name>
        <dbReference type="ChEBI" id="CHEBI:58053"/>
        <note>ligand shared between dimeric partners</note>
    </ligand>
</feature>
<feature type="binding site" description="in other chain" evidence="1">
    <location>
        <position position="223"/>
    </location>
    <ligand>
        <name>IMP</name>
        <dbReference type="ChEBI" id="CHEBI:58053"/>
        <note>ligand shared between dimeric partners</note>
    </ligand>
</feature>
<feature type="binding site" description="in other chain" evidence="1">
    <location>
        <position position="238"/>
    </location>
    <ligand>
        <name>IMP</name>
        <dbReference type="ChEBI" id="CHEBI:58053"/>
        <note>ligand shared between dimeric partners</note>
    </ligand>
</feature>
<feature type="binding site" evidence="1">
    <location>
        <begin position="298"/>
        <end position="304"/>
    </location>
    <ligand>
        <name>substrate</name>
    </ligand>
</feature>
<feature type="binding site" description="in other chain" evidence="1">
    <location>
        <position position="302"/>
    </location>
    <ligand>
        <name>IMP</name>
        <dbReference type="ChEBI" id="CHEBI:58053"/>
        <note>ligand shared between dimeric partners</note>
    </ligand>
</feature>
<feature type="binding site" evidence="1">
    <location>
        <position position="304"/>
    </location>
    <ligand>
        <name>GTP</name>
        <dbReference type="ChEBI" id="CHEBI:37565"/>
    </ligand>
</feature>
<feature type="binding site" evidence="1">
    <location>
        <begin position="330"/>
        <end position="332"/>
    </location>
    <ligand>
        <name>GTP</name>
        <dbReference type="ChEBI" id="CHEBI:37565"/>
    </ligand>
</feature>
<feature type="binding site" evidence="1">
    <location>
        <begin position="412"/>
        <end position="414"/>
    </location>
    <ligand>
        <name>GTP</name>
        <dbReference type="ChEBI" id="CHEBI:37565"/>
    </ligand>
</feature>
<proteinExistence type="inferred from homology"/>
<gene>
    <name evidence="1" type="primary">purA</name>
    <name type="ordered locus">GbCGDNIH1_0847</name>
</gene>
<protein>
    <recommendedName>
        <fullName evidence="1">Adenylosuccinate synthetase</fullName>
        <shortName evidence="1">AMPSase</shortName>
        <shortName evidence="1">AdSS</shortName>
        <ecNumber evidence="1">6.3.4.4</ecNumber>
    </recommendedName>
    <alternativeName>
        <fullName evidence="1">IMP--aspartate ligase</fullName>
    </alternativeName>
</protein>
<keyword id="KW-0963">Cytoplasm</keyword>
<keyword id="KW-0342">GTP-binding</keyword>
<keyword id="KW-0436">Ligase</keyword>
<keyword id="KW-0460">Magnesium</keyword>
<keyword id="KW-0479">Metal-binding</keyword>
<keyword id="KW-0547">Nucleotide-binding</keyword>
<keyword id="KW-0658">Purine biosynthesis</keyword>
<keyword id="KW-1185">Reference proteome</keyword>
<reference key="1">
    <citation type="journal article" date="2007" name="J. Bacteriol.">
        <title>Genome sequence analysis of the emerging human pathogenic acetic acid bacterium Granulibacter bethesdensis.</title>
        <authorList>
            <person name="Greenberg D.E."/>
            <person name="Porcella S.F."/>
            <person name="Zelazny A.M."/>
            <person name="Virtaneva K."/>
            <person name="Sturdevant D.E."/>
            <person name="Kupko J.J. III"/>
            <person name="Barbian K.D."/>
            <person name="Babar A."/>
            <person name="Dorward D.W."/>
            <person name="Holland S.M."/>
        </authorList>
    </citation>
    <scope>NUCLEOTIDE SEQUENCE [LARGE SCALE GENOMIC DNA]</scope>
    <source>
        <strain>ATCC BAA-1260 / CGDNIH1</strain>
    </source>
</reference>
<comment type="function">
    <text evidence="1">Plays an important role in the de novo pathway of purine nucleotide biosynthesis. Catalyzes the first committed step in the biosynthesis of AMP from IMP.</text>
</comment>
<comment type="catalytic activity">
    <reaction evidence="1">
        <text>IMP + L-aspartate + GTP = N(6)-(1,2-dicarboxyethyl)-AMP + GDP + phosphate + 2 H(+)</text>
        <dbReference type="Rhea" id="RHEA:15753"/>
        <dbReference type="ChEBI" id="CHEBI:15378"/>
        <dbReference type="ChEBI" id="CHEBI:29991"/>
        <dbReference type="ChEBI" id="CHEBI:37565"/>
        <dbReference type="ChEBI" id="CHEBI:43474"/>
        <dbReference type="ChEBI" id="CHEBI:57567"/>
        <dbReference type="ChEBI" id="CHEBI:58053"/>
        <dbReference type="ChEBI" id="CHEBI:58189"/>
        <dbReference type="EC" id="6.3.4.4"/>
    </reaction>
</comment>
<comment type="cofactor">
    <cofactor evidence="1">
        <name>Mg(2+)</name>
        <dbReference type="ChEBI" id="CHEBI:18420"/>
    </cofactor>
    <text evidence="1">Binds 1 Mg(2+) ion per subunit.</text>
</comment>
<comment type="pathway">
    <text evidence="1">Purine metabolism; AMP biosynthesis via de novo pathway; AMP from IMP: step 1/2.</text>
</comment>
<comment type="subunit">
    <text evidence="1">Homodimer.</text>
</comment>
<comment type="subcellular location">
    <subcellularLocation>
        <location evidence="1">Cytoplasm</location>
    </subcellularLocation>
</comment>
<comment type="similarity">
    <text evidence="1">Belongs to the adenylosuccinate synthetase family.</text>
</comment>
<accession>Q0BTV7</accession>
<organism>
    <name type="scientific">Granulibacter bethesdensis (strain ATCC BAA-1260 / CGDNIH1)</name>
    <dbReference type="NCBI Taxonomy" id="391165"/>
    <lineage>
        <taxon>Bacteria</taxon>
        <taxon>Pseudomonadati</taxon>
        <taxon>Pseudomonadota</taxon>
        <taxon>Alphaproteobacteria</taxon>
        <taxon>Acetobacterales</taxon>
        <taxon>Acetobacteraceae</taxon>
        <taxon>Granulibacter</taxon>
    </lineage>
</organism>
<dbReference type="EC" id="6.3.4.4" evidence="1"/>
<dbReference type="EMBL" id="CP000394">
    <property type="protein sequence ID" value="ABI61745.1"/>
    <property type="molecule type" value="Genomic_DNA"/>
</dbReference>
<dbReference type="RefSeq" id="WP_011631554.1">
    <property type="nucleotide sequence ID" value="NC_008343.2"/>
</dbReference>
<dbReference type="SMR" id="Q0BTV7"/>
<dbReference type="STRING" id="391165.GbCGDNIH1_0847"/>
<dbReference type="KEGG" id="gbe:GbCGDNIH1_0847"/>
<dbReference type="eggNOG" id="COG0104">
    <property type="taxonomic scope" value="Bacteria"/>
</dbReference>
<dbReference type="HOGENOM" id="CLU_029848_0_0_5"/>
<dbReference type="OrthoDB" id="9807553at2"/>
<dbReference type="UniPathway" id="UPA00075">
    <property type="reaction ID" value="UER00335"/>
</dbReference>
<dbReference type="Proteomes" id="UP000001963">
    <property type="component" value="Chromosome"/>
</dbReference>
<dbReference type="GO" id="GO:0005737">
    <property type="term" value="C:cytoplasm"/>
    <property type="evidence" value="ECO:0007669"/>
    <property type="project" value="UniProtKB-SubCell"/>
</dbReference>
<dbReference type="GO" id="GO:0004019">
    <property type="term" value="F:adenylosuccinate synthase activity"/>
    <property type="evidence" value="ECO:0007669"/>
    <property type="project" value="UniProtKB-UniRule"/>
</dbReference>
<dbReference type="GO" id="GO:0005525">
    <property type="term" value="F:GTP binding"/>
    <property type="evidence" value="ECO:0007669"/>
    <property type="project" value="UniProtKB-UniRule"/>
</dbReference>
<dbReference type="GO" id="GO:0000287">
    <property type="term" value="F:magnesium ion binding"/>
    <property type="evidence" value="ECO:0007669"/>
    <property type="project" value="UniProtKB-UniRule"/>
</dbReference>
<dbReference type="GO" id="GO:0044208">
    <property type="term" value="P:'de novo' AMP biosynthetic process"/>
    <property type="evidence" value="ECO:0007669"/>
    <property type="project" value="UniProtKB-UniRule"/>
</dbReference>
<dbReference type="GO" id="GO:0046040">
    <property type="term" value="P:IMP metabolic process"/>
    <property type="evidence" value="ECO:0007669"/>
    <property type="project" value="TreeGrafter"/>
</dbReference>
<dbReference type="CDD" id="cd03108">
    <property type="entry name" value="AdSS"/>
    <property type="match status" value="1"/>
</dbReference>
<dbReference type="FunFam" id="1.10.300.10:FF:000001">
    <property type="entry name" value="Adenylosuccinate synthetase"/>
    <property type="match status" value="1"/>
</dbReference>
<dbReference type="FunFam" id="3.90.170.10:FF:000001">
    <property type="entry name" value="Adenylosuccinate synthetase"/>
    <property type="match status" value="1"/>
</dbReference>
<dbReference type="Gene3D" id="3.40.440.10">
    <property type="entry name" value="Adenylosuccinate Synthetase, subunit A, domain 1"/>
    <property type="match status" value="1"/>
</dbReference>
<dbReference type="Gene3D" id="1.10.300.10">
    <property type="entry name" value="Adenylosuccinate Synthetase, subunit A, domain 2"/>
    <property type="match status" value="1"/>
</dbReference>
<dbReference type="Gene3D" id="3.90.170.10">
    <property type="entry name" value="Adenylosuccinate Synthetase, subunit A, domain 3"/>
    <property type="match status" value="1"/>
</dbReference>
<dbReference type="HAMAP" id="MF_00011">
    <property type="entry name" value="Adenylosucc_synth"/>
    <property type="match status" value="1"/>
</dbReference>
<dbReference type="InterPro" id="IPR018220">
    <property type="entry name" value="Adenylosuccin_syn_GTP-bd"/>
</dbReference>
<dbReference type="InterPro" id="IPR033128">
    <property type="entry name" value="Adenylosuccin_syn_Lys_AS"/>
</dbReference>
<dbReference type="InterPro" id="IPR042109">
    <property type="entry name" value="Adenylosuccinate_synth_dom1"/>
</dbReference>
<dbReference type="InterPro" id="IPR042110">
    <property type="entry name" value="Adenylosuccinate_synth_dom2"/>
</dbReference>
<dbReference type="InterPro" id="IPR042111">
    <property type="entry name" value="Adenylosuccinate_synth_dom3"/>
</dbReference>
<dbReference type="InterPro" id="IPR001114">
    <property type="entry name" value="Adenylosuccinate_synthetase"/>
</dbReference>
<dbReference type="InterPro" id="IPR027417">
    <property type="entry name" value="P-loop_NTPase"/>
</dbReference>
<dbReference type="NCBIfam" id="NF002223">
    <property type="entry name" value="PRK01117.1"/>
    <property type="match status" value="1"/>
</dbReference>
<dbReference type="NCBIfam" id="TIGR00184">
    <property type="entry name" value="purA"/>
    <property type="match status" value="1"/>
</dbReference>
<dbReference type="PANTHER" id="PTHR11846">
    <property type="entry name" value="ADENYLOSUCCINATE SYNTHETASE"/>
    <property type="match status" value="1"/>
</dbReference>
<dbReference type="PANTHER" id="PTHR11846:SF0">
    <property type="entry name" value="ADENYLOSUCCINATE SYNTHETASE"/>
    <property type="match status" value="1"/>
</dbReference>
<dbReference type="Pfam" id="PF00709">
    <property type="entry name" value="Adenylsucc_synt"/>
    <property type="match status" value="1"/>
</dbReference>
<dbReference type="SMART" id="SM00788">
    <property type="entry name" value="Adenylsucc_synt"/>
    <property type="match status" value="1"/>
</dbReference>
<dbReference type="SUPFAM" id="SSF52540">
    <property type="entry name" value="P-loop containing nucleoside triphosphate hydrolases"/>
    <property type="match status" value="1"/>
</dbReference>
<dbReference type="PROSITE" id="PS01266">
    <property type="entry name" value="ADENYLOSUCCIN_SYN_1"/>
    <property type="match status" value="1"/>
</dbReference>
<dbReference type="PROSITE" id="PS00513">
    <property type="entry name" value="ADENYLOSUCCIN_SYN_2"/>
    <property type="match status" value="1"/>
</dbReference>
<name>PURA_GRABC</name>
<sequence length="429" mass="45666">MANVAVIGAQWGDEGKGKVVDWLASRADVVVRFQGGHNAGHTLVVGDQTYKLSLLPSGLVRGKLGIIGNGVVVDPEALLSEIARVSAQGLAVGPETLRIADNATLILPLHGAIDRAREQARGDSKIGTTGRGIGPAYEDKVARRAIRIADLAEPETLSAKLDELLLHHNTLLAGLGAETFEKQALLDQLLALAPKILPYAEPVWERLDEIKRAGQRILFEGAQAVMLDVDHGTYPFVTSSNTIAATAAGGSGMGPSAVDFVLGIAKAYSTRVGSGPFPTELFDETGELLGDRGHEFGTVTGRRRRCGWFDAVLVRQAVKVGGIQGLALTKLDVLDGLPELKICTGYQINGETFRRLPASPAAQAAAKPVYESMEGWSGSTQGARSWADLPAQAIKYVRRIEELTEVPVTLLSTSPDRDDTILVKDPFEG</sequence>
<evidence type="ECO:0000255" key="1">
    <source>
        <dbReference type="HAMAP-Rule" id="MF_00011"/>
    </source>
</evidence>